<dbReference type="EMBL" id="AY362750">
    <property type="protein sequence ID" value="AAR13359.1"/>
    <property type="molecule type" value="Genomic_DNA"/>
</dbReference>
<dbReference type="RefSeq" id="NP_001078866.1">
    <property type="nucleotide sequence ID" value="NM_001085397.1"/>
</dbReference>
<dbReference type="SMR" id="Q67ES0"/>
<dbReference type="FunCoup" id="Q67ES0">
    <property type="interactions" value="87"/>
</dbReference>
<dbReference type="STRING" id="10116.ENSRNOP00000038784"/>
<dbReference type="GlyCosmos" id="Q67ES0">
    <property type="glycosylation" value="1 site, No reported glycans"/>
</dbReference>
<dbReference type="GlyGen" id="Q67ES0">
    <property type="glycosylation" value="1 site"/>
</dbReference>
<dbReference type="PaxDb" id="10116-ENSRNOP00000038784"/>
<dbReference type="GeneID" id="689869"/>
<dbReference type="KEGG" id="rno:689869"/>
<dbReference type="UCSC" id="RGD:1587511">
    <property type="organism name" value="rat"/>
</dbReference>
<dbReference type="AGR" id="RGD:1587511"/>
<dbReference type="CTD" id="387616"/>
<dbReference type="RGD" id="1587511">
    <property type="gene designation" value="Tas2r140"/>
</dbReference>
<dbReference type="eggNOG" id="ENOG502SKRK">
    <property type="taxonomic scope" value="Eukaryota"/>
</dbReference>
<dbReference type="InParanoid" id="Q67ES0"/>
<dbReference type="OrthoDB" id="8876749at2759"/>
<dbReference type="PhylomeDB" id="Q67ES0"/>
<dbReference type="Reactome" id="R-RNO-418594">
    <property type="pathway name" value="G alpha (i) signalling events"/>
</dbReference>
<dbReference type="Reactome" id="R-RNO-420499">
    <property type="pathway name" value="Class C/3 (Metabotropic glutamate/pheromone receptors)"/>
</dbReference>
<dbReference type="Reactome" id="R-RNO-9717207">
    <property type="pathway name" value="Sensory perception of sweet, bitter, and umami (glutamate) taste"/>
</dbReference>
<dbReference type="PRO" id="PR:Q67ES0"/>
<dbReference type="Proteomes" id="UP000002494">
    <property type="component" value="Unplaced"/>
</dbReference>
<dbReference type="GO" id="GO:0016020">
    <property type="term" value="C:membrane"/>
    <property type="evidence" value="ECO:0000318"/>
    <property type="project" value="GO_Central"/>
</dbReference>
<dbReference type="GO" id="GO:0033038">
    <property type="term" value="F:bitter taste receptor activity"/>
    <property type="evidence" value="ECO:0000318"/>
    <property type="project" value="GO_Central"/>
</dbReference>
<dbReference type="GO" id="GO:0004930">
    <property type="term" value="F:G protein-coupled receptor activity"/>
    <property type="evidence" value="ECO:0007669"/>
    <property type="project" value="UniProtKB-KW"/>
</dbReference>
<dbReference type="GO" id="GO:0001580">
    <property type="term" value="P:detection of chemical stimulus involved in sensory perception of bitter taste"/>
    <property type="evidence" value="ECO:0000318"/>
    <property type="project" value="GO_Central"/>
</dbReference>
<dbReference type="CDD" id="cd15019">
    <property type="entry name" value="7tm_TAS2R14-like"/>
    <property type="match status" value="1"/>
</dbReference>
<dbReference type="FunFam" id="1.20.1070.10:FF:000042">
    <property type="entry name" value="Taste receptor type 2 member 7"/>
    <property type="match status" value="1"/>
</dbReference>
<dbReference type="Gene3D" id="1.20.1070.10">
    <property type="entry name" value="Rhodopsin 7-helix transmembrane proteins"/>
    <property type="match status" value="1"/>
</dbReference>
<dbReference type="InterPro" id="IPR017452">
    <property type="entry name" value="GPCR_Rhodpsn_7TM"/>
</dbReference>
<dbReference type="InterPro" id="IPR007960">
    <property type="entry name" value="TAS2R"/>
</dbReference>
<dbReference type="PANTHER" id="PTHR11394">
    <property type="entry name" value="TASTE RECEPTOR TYPE 2"/>
    <property type="match status" value="1"/>
</dbReference>
<dbReference type="PANTHER" id="PTHR11394:SF23">
    <property type="entry name" value="TASTE RECEPTOR TYPE 2 MEMBER 14"/>
    <property type="match status" value="1"/>
</dbReference>
<dbReference type="Pfam" id="PF05296">
    <property type="entry name" value="TAS2R"/>
    <property type="match status" value="1"/>
</dbReference>
<dbReference type="SUPFAM" id="SSF81321">
    <property type="entry name" value="Family A G protein-coupled receptor-like"/>
    <property type="match status" value="1"/>
</dbReference>
<dbReference type="PROSITE" id="PS50262">
    <property type="entry name" value="G_PROTEIN_RECEP_F1_2"/>
    <property type="match status" value="1"/>
</dbReference>
<gene>
    <name evidence="1" type="primary">Tas2r140</name>
    <name type="synonym">Tas2r31</name>
</gene>
<name>TR140_RAT</name>
<keyword id="KW-0297">G-protein coupled receptor</keyword>
<keyword id="KW-0325">Glycoprotein</keyword>
<keyword id="KW-0472">Membrane</keyword>
<keyword id="KW-0675">Receptor</keyword>
<keyword id="KW-1185">Reference proteome</keyword>
<keyword id="KW-0716">Sensory transduction</keyword>
<keyword id="KW-0919">Taste</keyword>
<keyword id="KW-0807">Transducer</keyword>
<keyword id="KW-0812">Transmembrane</keyword>
<keyword id="KW-1133">Transmembrane helix</keyword>
<feature type="chain" id="PRO_0000247664" description="Taste receptor type 2 member 140">
    <location>
        <begin position="1"/>
        <end position="312"/>
    </location>
</feature>
<feature type="topological domain" description="Extracellular" evidence="2">
    <location>
        <begin position="1"/>
        <end position="9"/>
    </location>
</feature>
<feature type="transmembrane region" description="Helical; Name=1" evidence="2">
    <location>
        <begin position="10"/>
        <end position="30"/>
    </location>
</feature>
<feature type="topological domain" description="Cytoplasmic" evidence="2">
    <location>
        <begin position="31"/>
        <end position="46"/>
    </location>
</feature>
<feature type="transmembrane region" description="Helical; Name=2" evidence="2">
    <location>
        <begin position="47"/>
        <end position="67"/>
    </location>
</feature>
<feature type="topological domain" description="Extracellular" evidence="2">
    <location>
        <begin position="68"/>
        <end position="87"/>
    </location>
</feature>
<feature type="transmembrane region" description="Helical; Name=3" evidence="2">
    <location>
        <begin position="88"/>
        <end position="108"/>
    </location>
</feature>
<feature type="topological domain" description="Cytoplasmic" evidence="2">
    <location>
        <begin position="109"/>
        <end position="133"/>
    </location>
</feature>
<feature type="transmembrane region" description="Helical; Name=4" evidence="2">
    <location>
        <begin position="134"/>
        <end position="154"/>
    </location>
</feature>
<feature type="topological domain" description="Extracellular" evidence="2">
    <location>
        <begin position="155"/>
        <end position="185"/>
    </location>
</feature>
<feature type="transmembrane region" description="Helical; Name=5" evidence="2">
    <location>
        <begin position="186"/>
        <end position="206"/>
    </location>
</feature>
<feature type="topological domain" description="Cytoplasmic" evidence="2">
    <location>
        <begin position="207"/>
        <end position="229"/>
    </location>
</feature>
<feature type="transmembrane region" description="Helical; Name=6" evidence="2">
    <location>
        <begin position="230"/>
        <end position="250"/>
    </location>
</feature>
<feature type="topological domain" description="Extracellular" evidence="2">
    <location>
        <begin position="251"/>
        <end position="264"/>
    </location>
</feature>
<feature type="transmembrane region" description="Helical; Name=7" evidence="2">
    <location>
        <begin position="265"/>
        <end position="285"/>
    </location>
</feature>
<feature type="topological domain" description="Cytoplasmic" evidence="2">
    <location>
        <begin position="286"/>
        <end position="312"/>
    </location>
</feature>
<feature type="glycosylation site" description="N-linked (GlcNAc...) asparagine" evidence="2">
    <location>
        <position position="162"/>
    </location>
</feature>
<protein>
    <recommendedName>
        <fullName>Taste receptor type 2 member 140</fullName>
        <shortName>T2R140</shortName>
    </recommendedName>
    <alternativeName>
        <fullName>Taste receptor type 2 member 31</fullName>
        <shortName>T2R31</shortName>
    </alternativeName>
</protein>
<organism>
    <name type="scientific">Rattus norvegicus</name>
    <name type="common">Rat</name>
    <dbReference type="NCBI Taxonomy" id="10116"/>
    <lineage>
        <taxon>Eukaryota</taxon>
        <taxon>Metazoa</taxon>
        <taxon>Chordata</taxon>
        <taxon>Craniata</taxon>
        <taxon>Vertebrata</taxon>
        <taxon>Euteleostomi</taxon>
        <taxon>Mammalia</taxon>
        <taxon>Eutheria</taxon>
        <taxon>Euarchontoglires</taxon>
        <taxon>Glires</taxon>
        <taxon>Rodentia</taxon>
        <taxon>Myomorpha</taxon>
        <taxon>Muroidea</taxon>
        <taxon>Muridae</taxon>
        <taxon>Murinae</taxon>
        <taxon>Rattus</taxon>
    </lineage>
</organism>
<accession>Q67ES0</accession>
<evidence type="ECO:0000250" key="1">
    <source>
        <dbReference type="UniProtKB" id="Q7TQA4"/>
    </source>
</evidence>
<evidence type="ECO:0000255" key="2"/>
<evidence type="ECO:0000305" key="3"/>
<evidence type="ECO:0000312" key="4">
    <source>
        <dbReference type="EMBL" id="AAR13359.1"/>
    </source>
</evidence>
<reference evidence="4" key="1">
    <citation type="submission" date="2003-08" db="EMBL/GenBank/DDBJ databases">
        <title>Identification of new putative rat taste receptors belonging to the T2R family.</title>
        <authorList>
            <person name="Conte C."/>
            <person name="Ebeling M."/>
            <person name="Marcuz A."/>
            <person name="Andres-Barquin P.J."/>
        </authorList>
    </citation>
    <scope>NUCLEOTIDE SEQUENCE [GENOMIC DNA]</scope>
    <source>
        <strain evidence="4">Sprague-Dawley</strain>
    </source>
</reference>
<comment type="function">
    <text evidence="3">Putative taste receptor which may play a role in the perception of bitterness.</text>
</comment>
<comment type="subcellular location">
    <subcellularLocation>
        <location evidence="3">Membrane</location>
        <topology evidence="3">Multi-pass membrane protein</topology>
    </subcellularLocation>
</comment>
<comment type="miscellaneous">
    <text evidence="3">Several bitter taste receptors are expressed in a single taste receptor cell.</text>
</comment>
<comment type="similarity">
    <text evidence="2">Belongs to the G-protein coupled receptor T2R family.</text>
</comment>
<proteinExistence type="inferred from homology"/>
<sequence length="312" mass="35686">MKVTVECALLITLIVEIIIGCLGNGFIAVVNIMDWTKRRRFSLVDQILTALAISRLAFVWSLLTVLVISELHSSLLITRKMLRIINNFWTVTNHFSIWLATCLSIFYFLKIANFSNSIFLSLRWRVKTVVSLTLLVSLLLLLVNVIIINTCIVISVEGYKVNMSYSSHFNNNPQISRIPLFTNTMFTFIPFTVTLTIFLLLIFSLWRHLKKMQHRAKGPRDPSTTAHIKALQMVVTFLFLYTIFFLALVMQAWNNEIQSKTVFNLVFESIALAFPSGHSCVLILGNSKLRQAFLTIIWWLRSSFNAAELSSP</sequence>